<gene>
    <name type="primary">NR5A1</name>
    <name type="synonym">SF1</name>
</gene>
<sequence length="461" mass="51644">MDYSYDEDLDELCPVCGDKVSGYHYGLLTCESCKGFFKRTVQNNKHYTCTESQSCKIDKTLRKRCPFCRFQKCLTVGMRLEAVRADRMRGGRNKFGPMYKRDRALKQQKKAQIRANGFKLETGPPMGVPPPPPPPPDYMLPPGLHVPEPKGLASGPPAGPLGDFGAPALPMAVPSTNGPLAGYLYPAFPGRAIKSEYPEPYASPPQPGPPYGYPEPFSGGPGVPELILQLLQLEPDEDQVRARIIGCLQEPAKGRPDQPASFNLLCRMADQTFISIVDWARRCMVFKELEVADQMTLLQNCWSELLVFDHIYRQVQHGKEGSTLLVTGQEVELTTVAAQAGSLLHGLVLRAQELVLQMHALQLDRQEFVCLKFLILFSLDVKFLNNHSLVKDAQEKANTALLDYTLCHYPHCGDKFQQLLLCLVEVRALSMQAKEYLYHKHLGNEMPRNNLLIEMLQAKQT</sequence>
<dbReference type="EMBL" id="AF203911">
    <property type="protein sequence ID" value="AAG35648.1"/>
    <property type="molecule type" value="mRNA"/>
</dbReference>
<dbReference type="RefSeq" id="NP_001075320.1">
    <property type="nucleotide sequence ID" value="NM_001081851.1"/>
</dbReference>
<dbReference type="SMR" id="Q9GKL2"/>
<dbReference type="FunCoup" id="Q9GKL2">
    <property type="interactions" value="339"/>
</dbReference>
<dbReference type="STRING" id="9796.ENSECAP00000011635"/>
<dbReference type="PaxDb" id="9796-ENSECAP00000011635"/>
<dbReference type="GeneID" id="100033902"/>
<dbReference type="KEGG" id="ecb:100033902"/>
<dbReference type="CTD" id="2516"/>
<dbReference type="InParanoid" id="Q9GKL2"/>
<dbReference type="OrthoDB" id="5984981at2759"/>
<dbReference type="Proteomes" id="UP000002281">
    <property type="component" value="Unplaced"/>
</dbReference>
<dbReference type="GO" id="GO:0090575">
    <property type="term" value="C:RNA polymerase II transcription regulator complex"/>
    <property type="evidence" value="ECO:0000318"/>
    <property type="project" value="GO_Central"/>
</dbReference>
<dbReference type="GO" id="GO:0008289">
    <property type="term" value="F:lipid binding"/>
    <property type="evidence" value="ECO:0007669"/>
    <property type="project" value="UniProtKB-KW"/>
</dbReference>
<dbReference type="GO" id="GO:0004879">
    <property type="term" value="F:nuclear receptor activity"/>
    <property type="evidence" value="ECO:0007669"/>
    <property type="project" value="InterPro"/>
</dbReference>
<dbReference type="GO" id="GO:0000978">
    <property type="term" value="F:RNA polymerase II cis-regulatory region sequence-specific DNA binding"/>
    <property type="evidence" value="ECO:0000318"/>
    <property type="project" value="GO_Central"/>
</dbReference>
<dbReference type="GO" id="GO:0008270">
    <property type="term" value="F:zinc ion binding"/>
    <property type="evidence" value="ECO:0007669"/>
    <property type="project" value="UniProtKB-KW"/>
</dbReference>
<dbReference type="GO" id="GO:0008585">
    <property type="term" value="P:female gonad development"/>
    <property type="evidence" value="ECO:0000250"/>
    <property type="project" value="UniProtKB"/>
</dbReference>
<dbReference type="GO" id="GO:0009755">
    <property type="term" value="P:hormone-mediated signaling pathway"/>
    <property type="evidence" value="ECO:0000318"/>
    <property type="project" value="GO_Central"/>
</dbReference>
<dbReference type="GO" id="GO:0008584">
    <property type="term" value="P:male gonad development"/>
    <property type="evidence" value="ECO:0000250"/>
    <property type="project" value="UniProtKB"/>
</dbReference>
<dbReference type="GO" id="GO:0010628">
    <property type="term" value="P:positive regulation of gene expression"/>
    <property type="evidence" value="ECO:0000250"/>
    <property type="project" value="UniProtKB"/>
</dbReference>
<dbReference type="GO" id="GO:0006357">
    <property type="term" value="P:regulation of transcription by RNA polymerase II"/>
    <property type="evidence" value="ECO:0000318"/>
    <property type="project" value="GO_Central"/>
</dbReference>
<dbReference type="GO" id="GO:0007530">
    <property type="term" value="P:sex determination"/>
    <property type="evidence" value="ECO:0000250"/>
    <property type="project" value="UniProtKB"/>
</dbReference>
<dbReference type="GO" id="GO:0009888">
    <property type="term" value="P:tissue development"/>
    <property type="evidence" value="ECO:0000318"/>
    <property type="project" value="GO_Central"/>
</dbReference>
<dbReference type="CDD" id="cd07167">
    <property type="entry name" value="NR_DBD_Lrh-1_like"/>
    <property type="match status" value="1"/>
</dbReference>
<dbReference type="CDD" id="cd07070">
    <property type="entry name" value="NR_LBD_SF-1"/>
    <property type="match status" value="1"/>
</dbReference>
<dbReference type="FunFam" id="3.30.50.10:FF:000006">
    <property type="entry name" value="Nuclear receptor subfamily 5 group A member"/>
    <property type="match status" value="1"/>
</dbReference>
<dbReference type="FunFam" id="1.10.565.10:FF:000011">
    <property type="entry name" value="Nuclear receptor subfamily 5, group A, member 2"/>
    <property type="match status" value="1"/>
</dbReference>
<dbReference type="Gene3D" id="3.30.50.10">
    <property type="entry name" value="Erythroid Transcription Factor GATA-1, subunit A"/>
    <property type="match status" value="1"/>
</dbReference>
<dbReference type="Gene3D" id="1.10.565.10">
    <property type="entry name" value="Retinoid X Receptor"/>
    <property type="match status" value="1"/>
</dbReference>
<dbReference type="InterPro" id="IPR035500">
    <property type="entry name" value="NHR-like_dom_sf"/>
</dbReference>
<dbReference type="InterPro" id="IPR016355">
    <property type="entry name" value="NR5-like"/>
</dbReference>
<dbReference type="InterPro" id="IPR000536">
    <property type="entry name" value="Nucl_hrmn_rcpt_lig-bd"/>
</dbReference>
<dbReference type="InterPro" id="IPR001723">
    <property type="entry name" value="Nuclear_hrmn_rcpt"/>
</dbReference>
<dbReference type="InterPro" id="IPR001628">
    <property type="entry name" value="Znf_hrmn_rcpt"/>
</dbReference>
<dbReference type="InterPro" id="IPR013088">
    <property type="entry name" value="Znf_NHR/GATA"/>
</dbReference>
<dbReference type="PANTHER" id="PTHR24086">
    <property type="entry name" value="NUCLEAR RECEPTOR SUBFAMILY 5 GROUP A"/>
    <property type="match status" value="1"/>
</dbReference>
<dbReference type="PANTHER" id="PTHR24086:SF24">
    <property type="entry name" value="STEROIDOGENIC FACTOR 1"/>
    <property type="match status" value="1"/>
</dbReference>
<dbReference type="Pfam" id="PF00104">
    <property type="entry name" value="Hormone_recep"/>
    <property type="match status" value="1"/>
</dbReference>
<dbReference type="Pfam" id="PF00105">
    <property type="entry name" value="zf-C4"/>
    <property type="match status" value="1"/>
</dbReference>
<dbReference type="PIRSF" id="PIRSF002530">
    <property type="entry name" value="Nuc_orph_FTZ-F1"/>
    <property type="match status" value="1"/>
</dbReference>
<dbReference type="PRINTS" id="PR00398">
    <property type="entry name" value="STRDHORMONER"/>
</dbReference>
<dbReference type="PRINTS" id="PR00047">
    <property type="entry name" value="STROIDFINGER"/>
</dbReference>
<dbReference type="SMART" id="SM00430">
    <property type="entry name" value="HOLI"/>
    <property type="match status" value="1"/>
</dbReference>
<dbReference type="SMART" id="SM00399">
    <property type="entry name" value="ZnF_C4"/>
    <property type="match status" value="1"/>
</dbReference>
<dbReference type="SUPFAM" id="SSF57716">
    <property type="entry name" value="Glucocorticoid receptor-like (DNA-binding domain)"/>
    <property type="match status" value="1"/>
</dbReference>
<dbReference type="SUPFAM" id="SSF48508">
    <property type="entry name" value="Nuclear receptor ligand-binding domain"/>
    <property type="match status" value="1"/>
</dbReference>
<dbReference type="PROSITE" id="PS51843">
    <property type="entry name" value="NR_LBD"/>
    <property type="match status" value="1"/>
</dbReference>
<dbReference type="PROSITE" id="PS00031">
    <property type="entry name" value="NUCLEAR_REC_DBD_1"/>
    <property type="match status" value="1"/>
</dbReference>
<dbReference type="PROSITE" id="PS51030">
    <property type="entry name" value="NUCLEAR_REC_DBD_2"/>
    <property type="match status" value="1"/>
</dbReference>
<protein>
    <recommendedName>
        <fullName>Steroidogenic factor 1</fullName>
        <shortName>SF-1</shortName>
        <shortName>STF-1</shortName>
    </recommendedName>
    <alternativeName>
        <fullName>Nuclear receptor subfamily 5 group A member 1</fullName>
    </alternativeName>
</protein>
<organism>
    <name type="scientific">Equus caballus</name>
    <name type="common">Horse</name>
    <dbReference type="NCBI Taxonomy" id="9796"/>
    <lineage>
        <taxon>Eukaryota</taxon>
        <taxon>Metazoa</taxon>
        <taxon>Chordata</taxon>
        <taxon>Craniata</taxon>
        <taxon>Vertebrata</taxon>
        <taxon>Euteleostomi</taxon>
        <taxon>Mammalia</taxon>
        <taxon>Eutheria</taxon>
        <taxon>Laurasiatheria</taxon>
        <taxon>Perissodactyla</taxon>
        <taxon>Equidae</taxon>
        <taxon>Equus</taxon>
    </lineage>
</organism>
<name>STF1_HORSE</name>
<proteinExistence type="evidence at transcript level"/>
<accession>Q9GKL2</accession>
<keyword id="KW-0007">Acetylation</keyword>
<keyword id="KW-0010">Activator</keyword>
<keyword id="KW-0238">DNA-binding</keyword>
<keyword id="KW-1017">Isopeptide bond</keyword>
<keyword id="KW-0446">Lipid-binding</keyword>
<keyword id="KW-0479">Metal-binding</keyword>
<keyword id="KW-0539">Nucleus</keyword>
<keyword id="KW-0597">Phosphoprotein</keyword>
<keyword id="KW-0675">Receptor</keyword>
<keyword id="KW-1185">Reference proteome</keyword>
<keyword id="KW-0678">Repressor</keyword>
<keyword id="KW-0804">Transcription</keyword>
<keyword id="KW-0805">Transcription regulation</keyword>
<keyword id="KW-0832">Ubl conjugation</keyword>
<keyword id="KW-0862">Zinc</keyword>
<keyword id="KW-0863">Zinc-finger</keyword>
<evidence type="ECO:0000250" key="1"/>
<evidence type="ECO:0000250" key="2">
    <source>
        <dbReference type="UniProtKB" id="P33242"/>
    </source>
</evidence>
<evidence type="ECO:0000250" key="3">
    <source>
        <dbReference type="UniProtKB" id="Q13285"/>
    </source>
</evidence>
<evidence type="ECO:0000255" key="4">
    <source>
        <dbReference type="PROSITE-ProRule" id="PRU00407"/>
    </source>
</evidence>
<evidence type="ECO:0000255" key="5">
    <source>
        <dbReference type="PROSITE-ProRule" id="PRU01189"/>
    </source>
</evidence>
<evidence type="ECO:0000256" key="6">
    <source>
        <dbReference type="SAM" id="MobiDB-lite"/>
    </source>
</evidence>
<evidence type="ECO:0000305" key="7"/>
<reference key="1">
    <citation type="journal article" date="2000" name="Endocrinology">
        <title>Expression and regulation of transcripts encoding two members of the NR5A nuclear receptor subfamily of orphan nuclear receptors, steroidogenic factor-1 and NR5A2, in equine ovarian cells during the ovulatory process.</title>
        <authorList>
            <person name="Boerboom D."/>
            <person name="Pilon N."/>
            <person name="Behdjani R."/>
            <person name="Silversides D.W."/>
            <person name="Sirois J."/>
        </authorList>
    </citation>
    <scope>NUCLEOTIDE SEQUENCE [MRNA]</scope>
    <source>
        <tissue>Corpus luteum</tissue>
        <tissue>Ovarian follicle</tissue>
    </source>
</reference>
<comment type="function">
    <text evidence="1">Transcriptional activator. Seems to be essential for sexual differentiation and formation of the primary steroidogenic tissues. Binds to the Ad4 site found in the promoter region of steroidogenic P450 genes such as CYP11A, CYP11B and CYP21B. Also regulates the AMH/Muellerian inhibiting substance gene as well as the AHCH and STAR genes. 5'-YCAAGGYC-3' and 5'-RRAGGTCA-3' are the consensus sequences for the recognition by NR5A1. The SFPQ-NONO-NR5A1 complex binds to the CYP17 promoter and regulates basal and cAMP-dependent transcriptional activity. Binds phospholipids with a phosphatidylinositol (PI) headgroup, in particular PI(3,4)P2 and PI(3,4,5)P3. Activated by the phosphorylation of NR5A1 by HIPK3 leading to increased steroidogenic gene expression upon cAMP signaling pathway stimulation (By similarity).</text>
</comment>
<comment type="subunit">
    <text evidence="1">Binds DNA as a monomer (By similarity). Part of a complex consisting of SFPQ, NONO and NR5A1. Interacts with NR0B2. Interacts with DGKQ and CDK7. Binds to and activated by HIPK3 (By similarity).</text>
</comment>
<comment type="subcellular location">
    <subcellularLocation>
        <location evidence="4">Nucleus</location>
    </subcellularLocation>
</comment>
<comment type="PTM">
    <text evidence="1">Acetylation stimulates the transcriptional activity.</text>
</comment>
<comment type="PTM">
    <text evidence="1">Sumoylation reduces CDK7-mediated phosphorylation on Ser-203.</text>
</comment>
<comment type="PTM">
    <text evidence="1">Phosphorylated on Ser-203 by CDK7. This phosphorylation promotes transcriptional activity (By similarity).</text>
</comment>
<comment type="similarity">
    <text evidence="7">Belongs to the nuclear hormone receptor family. NR5 subfamily.</text>
</comment>
<feature type="chain" id="PRO_0000053730" description="Steroidogenic factor 1">
    <location>
        <begin position="1"/>
        <end position="461"/>
    </location>
</feature>
<feature type="domain" description="NR LBD" evidence="5">
    <location>
        <begin position="222"/>
        <end position="459"/>
    </location>
</feature>
<feature type="DNA-binding region" description="Nuclear receptor" evidence="4">
    <location>
        <begin position="10"/>
        <end position="85"/>
    </location>
</feature>
<feature type="zinc finger region" description="NR C4-type" evidence="4">
    <location>
        <begin position="13"/>
        <end position="33"/>
    </location>
</feature>
<feature type="zinc finger region" description="NR C4-type" evidence="4">
    <location>
        <begin position="49"/>
        <end position="73"/>
    </location>
</feature>
<feature type="region of interest" description="Disordered" evidence="6">
    <location>
        <begin position="119"/>
        <end position="153"/>
    </location>
</feature>
<feature type="compositionally biased region" description="Pro residues" evidence="6">
    <location>
        <begin position="126"/>
        <end position="139"/>
    </location>
</feature>
<feature type="binding site" evidence="2">
    <location>
        <position position="341"/>
    </location>
    <ligand>
        <name>a 1,2-diacyl-sn-glycero-3-phosphocholine</name>
        <dbReference type="ChEBI" id="CHEBI:57643"/>
    </ligand>
</feature>
<feature type="binding site" evidence="2">
    <location>
        <position position="436"/>
    </location>
    <ligand>
        <name>a 1,2-diacyl-sn-glycero-3-phosphocholine</name>
        <dbReference type="ChEBI" id="CHEBI:57643"/>
    </ligand>
</feature>
<feature type="binding site" evidence="2">
    <location>
        <position position="440"/>
    </location>
    <ligand>
        <name>a 1,2-diacyl-sn-glycero-3-phosphocholine</name>
        <dbReference type="ChEBI" id="CHEBI:57643"/>
    </ligand>
</feature>
<feature type="modified residue" description="N6-acetyllysine" evidence="3">
    <location>
        <position position="34"/>
    </location>
</feature>
<feature type="modified residue" description="N6-acetyllysine" evidence="3">
    <location>
        <position position="38"/>
    </location>
</feature>
<feature type="modified residue" description="N6-acetyllysine" evidence="3">
    <location>
        <position position="72"/>
    </location>
</feature>
<feature type="modified residue" description="Phosphoserine; by CDK7" evidence="3">
    <location>
        <position position="203"/>
    </location>
</feature>
<feature type="cross-link" description="Glycyl lysine isopeptide (Lys-Gly) (interchain with G-Cter in SUMO)" evidence="1">
    <location>
        <position position="119"/>
    </location>
</feature>
<feature type="cross-link" description="Glycyl lysine isopeptide (Lys-Gly) (interchain with G-Cter in SUMO)" evidence="1">
    <location>
        <position position="194"/>
    </location>
</feature>